<sequence>MAATLGSGERWTEAYIDAVRRNKYPEDTPPESHDPCGCCNCVKAQKEKKSENEWTQTRQGEGSSMYSEEQLLGVQRIKKCRNYYEILGVSRDASDEELKKAYRKLALKFHPDKNCAPGATDAFKAIGNAFAVLSNPDKRLRYDEYGDEQVTFTAPRARPYNYYRDFEADITPEELSNVFFGGHFPTGNIHMFSNVTDDAHYYRRRHRHERTQTQKEEEEEKPQTTYSAFIQLLPVLVIVIISVITQLLATNPPYSLFYKSTLGYTISRETQNLQVPYFVDKNFDKAYRGASLHDLEKTIEKDYIDYIRTSCWKEKQQKSELTNLAGLYRDERLKQKAESLKLENCEKLSKLIGLRRGG</sequence>
<evidence type="ECO:0000250" key="1">
    <source>
        <dbReference type="UniProtKB" id="Q9H819"/>
    </source>
</evidence>
<evidence type="ECO:0000255" key="2"/>
<evidence type="ECO:0000255" key="3">
    <source>
        <dbReference type="PROSITE-ProRule" id="PRU00286"/>
    </source>
</evidence>
<dbReference type="EMBL" id="AB062944">
    <property type="protein sequence ID" value="BAB60734.1"/>
    <property type="molecule type" value="mRNA"/>
</dbReference>
<dbReference type="SMR" id="Q95KD5"/>
<dbReference type="STRING" id="9541.ENSMFAP00000002924"/>
<dbReference type="eggNOG" id="KOG0714">
    <property type="taxonomic scope" value="Eukaryota"/>
</dbReference>
<dbReference type="Proteomes" id="UP000233100">
    <property type="component" value="Unplaced"/>
</dbReference>
<dbReference type="GO" id="GO:0005789">
    <property type="term" value="C:endoplasmic reticulum membrane"/>
    <property type="evidence" value="ECO:0000250"/>
    <property type="project" value="UniProtKB"/>
</dbReference>
<dbReference type="GO" id="GO:0030544">
    <property type="term" value="F:Hsp70 protein binding"/>
    <property type="evidence" value="ECO:0007669"/>
    <property type="project" value="TreeGrafter"/>
</dbReference>
<dbReference type="GO" id="GO:0071218">
    <property type="term" value="P:cellular response to misfolded protein"/>
    <property type="evidence" value="ECO:0007669"/>
    <property type="project" value="TreeGrafter"/>
</dbReference>
<dbReference type="GO" id="GO:0051085">
    <property type="term" value="P:chaperone cofactor-dependent protein refolding"/>
    <property type="evidence" value="ECO:0007669"/>
    <property type="project" value="TreeGrafter"/>
</dbReference>
<dbReference type="CDD" id="cd06257">
    <property type="entry name" value="DnaJ"/>
    <property type="match status" value="1"/>
</dbReference>
<dbReference type="FunFam" id="1.10.287.110:FF:000004">
    <property type="entry name" value="DnaJ (Hsp40) homolog, subfamily B, member 14"/>
    <property type="match status" value="1"/>
</dbReference>
<dbReference type="Gene3D" id="1.10.287.110">
    <property type="entry name" value="DnaJ domain"/>
    <property type="match status" value="1"/>
</dbReference>
<dbReference type="InterPro" id="IPR001623">
    <property type="entry name" value="DnaJ_domain"/>
</dbReference>
<dbReference type="InterPro" id="IPR018253">
    <property type="entry name" value="DnaJ_domain_CS"/>
</dbReference>
<dbReference type="InterPro" id="IPR051100">
    <property type="entry name" value="DnaJ_subfamily_B/C"/>
</dbReference>
<dbReference type="InterPro" id="IPR015399">
    <property type="entry name" value="DUF1977_DnaJ-like"/>
</dbReference>
<dbReference type="InterPro" id="IPR036869">
    <property type="entry name" value="J_dom_sf"/>
</dbReference>
<dbReference type="PANTHER" id="PTHR43908">
    <property type="entry name" value="AT29763P-RELATED"/>
    <property type="match status" value="1"/>
</dbReference>
<dbReference type="PANTHER" id="PTHR43908:SF2">
    <property type="entry name" value="DNAJ HOMOLOG SUBFAMILY C MEMBER 18"/>
    <property type="match status" value="1"/>
</dbReference>
<dbReference type="Pfam" id="PF00226">
    <property type="entry name" value="DnaJ"/>
    <property type="match status" value="1"/>
</dbReference>
<dbReference type="Pfam" id="PF09320">
    <property type="entry name" value="DUF1977"/>
    <property type="match status" value="1"/>
</dbReference>
<dbReference type="PRINTS" id="PR00625">
    <property type="entry name" value="JDOMAIN"/>
</dbReference>
<dbReference type="SMART" id="SM00271">
    <property type="entry name" value="DnaJ"/>
    <property type="match status" value="1"/>
</dbReference>
<dbReference type="SUPFAM" id="SSF46565">
    <property type="entry name" value="Chaperone J-domain"/>
    <property type="match status" value="1"/>
</dbReference>
<dbReference type="PROSITE" id="PS00636">
    <property type="entry name" value="DNAJ_1"/>
    <property type="match status" value="1"/>
</dbReference>
<dbReference type="PROSITE" id="PS50076">
    <property type="entry name" value="DNAJ_2"/>
    <property type="match status" value="1"/>
</dbReference>
<accession>Q95KD5</accession>
<keyword id="KW-0143">Chaperone</keyword>
<keyword id="KW-0256">Endoplasmic reticulum</keyword>
<keyword id="KW-0472">Membrane</keyword>
<keyword id="KW-1185">Reference proteome</keyword>
<keyword id="KW-0812">Transmembrane</keyword>
<keyword id="KW-1133">Transmembrane helix</keyword>
<comment type="subcellular location">
    <subcellularLocation>
        <location evidence="1">Endoplasmic reticulum membrane</location>
        <topology evidence="1">Single-pass membrane protein</topology>
    </subcellularLocation>
</comment>
<protein>
    <recommendedName>
        <fullName>DnaJ homolog subfamily C member 18</fullName>
    </recommendedName>
</protein>
<proteinExistence type="evidence at transcript level"/>
<name>DJC18_MACFA</name>
<gene>
    <name type="primary">DNAJC18</name>
    <name type="ORF">QflA-15848</name>
</gene>
<feature type="chain" id="PRO_0000244086" description="DnaJ homolog subfamily C member 18">
    <location>
        <begin position="1"/>
        <end position="358"/>
    </location>
</feature>
<feature type="transmembrane region" description="Helical" evidence="2">
    <location>
        <begin position="228"/>
        <end position="248"/>
    </location>
</feature>
<feature type="domain" description="J" evidence="3">
    <location>
        <begin position="82"/>
        <end position="146"/>
    </location>
</feature>
<reference key="1">
    <citation type="submission" date="2001-06" db="EMBL/GenBank/DDBJ databases">
        <title>Isolation of full-length cDNA clones from macaque brain cDNA libraries.</title>
        <authorList>
            <person name="Osada N."/>
            <person name="Hida M."/>
            <person name="Kusuda J."/>
            <person name="Tanuma R."/>
            <person name="Iseki K."/>
            <person name="Hirai M."/>
            <person name="Terao K."/>
            <person name="Suzuki Y."/>
            <person name="Sugano S."/>
            <person name="Hashimoto K."/>
        </authorList>
    </citation>
    <scope>NUCLEOTIDE SEQUENCE [LARGE SCALE MRNA]</scope>
    <source>
        <tissue>Frontal cortex</tissue>
    </source>
</reference>
<organism>
    <name type="scientific">Macaca fascicularis</name>
    <name type="common">Crab-eating macaque</name>
    <name type="synonym">Cynomolgus monkey</name>
    <dbReference type="NCBI Taxonomy" id="9541"/>
    <lineage>
        <taxon>Eukaryota</taxon>
        <taxon>Metazoa</taxon>
        <taxon>Chordata</taxon>
        <taxon>Craniata</taxon>
        <taxon>Vertebrata</taxon>
        <taxon>Euteleostomi</taxon>
        <taxon>Mammalia</taxon>
        <taxon>Eutheria</taxon>
        <taxon>Euarchontoglires</taxon>
        <taxon>Primates</taxon>
        <taxon>Haplorrhini</taxon>
        <taxon>Catarrhini</taxon>
        <taxon>Cercopithecidae</taxon>
        <taxon>Cercopithecinae</taxon>
        <taxon>Macaca</taxon>
    </lineage>
</organism>